<name>CMR1_YARLI</name>
<feature type="chain" id="PRO_0000351117" description="DNA damage-binding protein CMR1">
    <location>
        <begin position="1"/>
        <end position="539"/>
    </location>
</feature>
<feature type="repeat" description="WD 1" evidence="2">
    <location>
        <begin position="182"/>
        <end position="223"/>
    </location>
</feature>
<feature type="repeat" description="WD 2" evidence="2">
    <location>
        <begin position="226"/>
        <end position="268"/>
    </location>
</feature>
<feature type="repeat" description="WD 3" evidence="2">
    <location>
        <begin position="316"/>
        <end position="356"/>
    </location>
</feature>
<feature type="repeat" description="WD 4" evidence="2">
    <location>
        <begin position="377"/>
        <end position="415"/>
    </location>
</feature>
<feature type="repeat" description="WD 5" evidence="2">
    <location>
        <begin position="462"/>
        <end position="505"/>
    </location>
</feature>
<feature type="repeat" description="WD 6" evidence="2">
    <location>
        <begin position="508"/>
        <end position="539"/>
    </location>
</feature>
<feature type="region of interest" description="Disordered" evidence="3">
    <location>
        <begin position="22"/>
        <end position="89"/>
    </location>
</feature>
<feature type="compositionally biased region" description="Basic and acidic residues" evidence="3">
    <location>
        <begin position="27"/>
        <end position="39"/>
    </location>
</feature>
<organism>
    <name type="scientific">Yarrowia lipolytica (strain CLIB 122 / E 150)</name>
    <name type="common">Yeast</name>
    <name type="synonym">Candida lipolytica</name>
    <dbReference type="NCBI Taxonomy" id="284591"/>
    <lineage>
        <taxon>Eukaryota</taxon>
        <taxon>Fungi</taxon>
        <taxon>Dikarya</taxon>
        <taxon>Ascomycota</taxon>
        <taxon>Saccharomycotina</taxon>
        <taxon>Dipodascomycetes</taxon>
        <taxon>Dipodascales</taxon>
        <taxon>Dipodascales incertae sedis</taxon>
        <taxon>Yarrowia</taxon>
    </lineage>
</organism>
<gene>
    <name type="ordered locus">YALI0F21747g</name>
</gene>
<comment type="function">
    <text evidence="1">DNA-binding protein that binds to both single- and double-stranded DNA. Binds preferentially to UV-damaged DNA. May be involved in DNA-metabolic processes.</text>
</comment>
<comment type="similarity">
    <text evidence="4">Belongs to the WD repeat DDB2/WDR76 family.</text>
</comment>
<protein>
    <recommendedName>
        <fullName evidence="1">DNA damage-binding protein CMR1</fullName>
    </recommendedName>
</protein>
<proteinExistence type="inferred from homology"/>
<sequence>MSELEQIRLANIERNKALLAALNLPTEAKKESVDPEVAPKKSRKRNSARLESPDDGSDDSAPRTRRKSRRLQGLDPEANALKQEDLGGSGELKRLMQQLNGGVKKERLSGDLSLKEMLTKTGLDEKEWSASLGQLFGDGSRVSQGDFFDEIVKKEEEDTKDIDIKQSRDNLSGLQLGKMSKVTKERIYITAVHPGTDKRIVLAGDKIGVLGIWDVDSDNEPLQLQLHHATIPALCFDQNSNDILYSASYDGSVRSLELKTGKSGDVLDLEAKKNASVGVSDVANPQPHLLYASTLCGHLIRKDLRTKSTEYETLILGEKKIGGFSVDPINTHLLATGSLDRSMRIWDLRATETARTIPGGEVIDTQFQMPHLQAIYNSRLSVSSTDWNLAGQIVCNGYDDTINIFNQSDYFLDMLNDGNGTEPVKKTRRTRNSKLAEPEISDQELPEIKKPSVRIKHNCQTGRWVTILKARWQQQPLDGVQKFAIANMNRYIDIYSGTGHQLAHLGDALMTAVPSALAFHPTQNWIAGGNSSGKMYWWE</sequence>
<reference key="1">
    <citation type="journal article" date="2004" name="Nature">
        <title>Genome evolution in yeasts.</title>
        <authorList>
            <person name="Dujon B."/>
            <person name="Sherman D."/>
            <person name="Fischer G."/>
            <person name="Durrens P."/>
            <person name="Casaregola S."/>
            <person name="Lafontaine I."/>
            <person name="de Montigny J."/>
            <person name="Marck C."/>
            <person name="Neuveglise C."/>
            <person name="Talla E."/>
            <person name="Goffard N."/>
            <person name="Frangeul L."/>
            <person name="Aigle M."/>
            <person name="Anthouard V."/>
            <person name="Babour A."/>
            <person name="Barbe V."/>
            <person name="Barnay S."/>
            <person name="Blanchin S."/>
            <person name="Beckerich J.-M."/>
            <person name="Beyne E."/>
            <person name="Bleykasten C."/>
            <person name="Boisrame A."/>
            <person name="Boyer J."/>
            <person name="Cattolico L."/>
            <person name="Confanioleri F."/>
            <person name="de Daruvar A."/>
            <person name="Despons L."/>
            <person name="Fabre E."/>
            <person name="Fairhead C."/>
            <person name="Ferry-Dumazet H."/>
            <person name="Groppi A."/>
            <person name="Hantraye F."/>
            <person name="Hennequin C."/>
            <person name="Jauniaux N."/>
            <person name="Joyet P."/>
            <person name="Kachouri R."/>
            <person name="Kerrest A."/>
            <person name="Koszul R."/>
            <person name="Lemaire M."/>
            <person name="Lesur I."/>
            <person name="Ma L."/>
            <person name="Muller H."/>
            <person name="Nicaud J.-M."/>
            <person name="Nikolski M."/>
            <person name="Oztas S."/>
            <person name="Ozier-Kalogeropoulos O."/>
            <person name="Pellenz S."/>
            <person name="Potier S."/>
            <person name="Richard G.-F."/>
            <person name="Straub M.-L."/>
            <person name="Suleau A."/>
            <person name="Swennen D."/>
            <person name="Tekaia F."/>
            <person name="Wesolowski-Louvel M."/>
            <person name="Westhof E."/>
            <person name="Wirth B."/>
            <person name="Zeniou-Meyer M."/>
            <person name="Zivanovic Y."/>
            <person name="Bolotin-Fukuhara M."/>
            <person name="Thierry A."/>
            <person name="Bouchier C."/>
            <person name="Caudron B."/>
            <person name="Scarpelli C."/>
            <person name="Gaillardin C."/>
            <person name="Weissenbach J."/>
            <person name="Wincker P."/>
            <person name="Souciet J.-L."/>
        </authorList>
    </citation>
    <scope>NUCLEOTIDE SEQUENCE [LARGE SCALE GENOMIC DNA]</scope>
    <source>
        <strain>CLIB 122 / E 150</strain>
    </source>
</reference>
<accession>Q6C0U2</accession>
<evidence type="ECO:0000250" key="1">
    <source>
        <dbReference type="UniProtKB" id="Q12510"/>
    </source>
</evidence>
<evidence type="ECO:0000255" key="2"/>
<evidence type="ECO:0000256" key="3">
    <source>
        <dbReference type="SAM" id="MobiDB-lite"/>
    </source>
</evidence>
<evidence type="ECO:0000305" key="4"/>
<keyword id="KW-0227">DNA damage</keyword>
<keyword id="KW-0238">DNA-binding</keyword>
<keyword id="KW-1185">Reference proteome</keyword>
<keyword id="KW-0677">Repeat</keyword>
<keyword id="KW-0853">WD repeat</keyword>
<dbReference type="EMBL" id="CR382132">
    <property type="protein sequence ID" value="CAG78531.1"/>
    <property type="molecule type" value="Genomic_DNA"/>
</dbReference>
<dbReference type="RefSeq" id="XP_505720.1">
    <property type="nucleotide sequence ID" value="XM_505720.1"/>
</dbReference>
<dbReference type="SMR" id="Q6C0U2"/>
<dbReference type="FunCoup" id="Q6C0U2">
    <property type="interactions" value="718"/>
</dbReference>
<dbReference type="STRING" id="284591.Q6C0U2"/>
<dbReference type="EnsemblFungi" id="CAG78531">
    <property type="protein sequence ID" value="CAG78531"/>
    <property type="gene ID" value="YALI0_F21747g"/>
</dbReference>
<dbReference type="KEGG" id="yli:2907839"/>
<dbReference type="VEuPathDB" id="FungiDB:YALI0_F21747g"/>
<dbReference type="HOGENOM" id="CLU_017019_1_1_1"/>
<dbReference type="InParanoid" id="Q6C0U2"/>
<dbReference type="OMA" id="DPNTLYW"/>
<dbReference type="OrthoDB" id="25221at4891"/>
<dbReference type="Proteomes" id="UP000001300">
    <property type="component" value="Chromosome F"/>
</dbReference>
<dbReference type="GO" id="GO:0000785">
    <property type="term" value="C:chromatin"/>
    <property type="evidence" value="ECO:0007669"/>
    <property type="project" value="EnsemblFungi"/>
</dbReference>
<dbReference type="GO" id="GO:0005737">
    <property type="term" value="C:cytoplasm"/>
    <property type="evidence" value="ECO:0007669"/>
    <property type="project" value="EnsemblFungi"/>
</dbReference>
<dbReference type="GO" id="GO:0034399">
    <property type="term" value="C:nuclear periphery"/>
    <property type="evidence" value="ECO:0007669"/>
    <property type="project" value="EnsemblFungi"/>
</dbReference>
<dbReference type="GO" id="GO:0005634">
    <property type="term" value="C:nucleus"/>
    <property type="evidence" value="ECO:0000318"/>
    <property type="project" value="GO_Central"/>
</dbReference>
<dbReference type="GO" id="GO:0003677">
    <property type="term" value="F:DNA binding"/>
    <property type="evidence" value="ECO:0000318"/>
    <property type="project" value="GO_Central"/>
</dbReference>
<dbReference type="GO" id="GO:0006974">
    <property type="term" value="P:DNA damage response"/>
    <property type="evidence" value="ECO:0007669"/>
    <property type="project" value="UniProtKB-KW"/>
</dbReference>
<dbReference type="GO" id="GO:2000001">
    <property type="term" value="P:regulation of DNA damage checkpoint"/>
    <property type="evidence" value="ECO:0000318"/>
    <property type="project" value="GO_Central"/>
</dbReference>
<dbReference type="FunFam" id="2.130.10.10:FF:000562">
    <property type="entry name" value="DNA damage-binding protein CMR1"/>
    <property type="match status" value="1"/>
</dbReference>
<dbReference type="Gene3D" id="2.130.10.10">
    <property type="entry name" value="YVTN repeat-like/Quinoprotein amine dehydrogenase"/>
    <property type="match status" value="1"/>
</dbReference>
<dbReference type="InterPro" id="IPR015943">
    <property type="entry name" value="WD40/YVTN_repeat-like_dom_sf"/>
</dbReference>
<dbReference type="InterPro" id="IPR019775">
    <property type="entry name" value="WD40_repeat_CS"/>
</dbReference>
<dbReference type="InterPro" id="IPR036322">
    <property type="entry name" value="WD40_repeat_dom_sf"/>
</dbReference>
<dbReference type="InterPro" id="IPR001680">
    <property type="entry name" value="WD40_rpt"/>
</dbReference>
<dbReference type="InterPro" id="IPR050853">
    <property type="entry name" value="WD_repeat_DNA-damage-binding"/>
</dbReference>
<dbReference type="PANTHER" id="PTHR14773">
    <property type="entry name" value="WD REPEAT-CONTAINING PROTEIN 76"/>
    <property type="match status" value="1"/>
</dbReference>
<dbReference type="PANTHER" id="PTHR14773:SF0">
    <property type="entry name" value="WD REPEAT-CONTAINING PROTEIN 76"/>
    <property type="match status" value="1"/>
</dbReference>
<dbReference type="Pfam" id="PF00400">
    <property type="entry name" value="WD40"/>
    <property type="match status" value="1"/>
</dbReference>
<dbReference type="SMART" id="SM00320">
    <property type="entry name" value="WD40"/>
    <property type="match status" value="4"/>
</dbReference>
<dbReference type="SUPFAM" id="SSF50978">
    <property type="entry name" value="WD40 repeat-like"/>
    <property type="match status" value="1"/>
</dbReference>
<dbReference type="PROSITE" id="PS00678">
    <property type="entry name" value="WD_REPEATS_1"/>
    <property type="match status" value="1"/>
</dbReference>
<dbReference type="PROSITE" id="PS50082">
    <property type="entry name" value="WD_REPEATS_2"/>
    <property type="match status" value="1"/>
</dbReference>
<dbReference type="PROSITE" id="PS50294">
    <property type="entry name" value="WD_REPEATS_REGION"/>
    <property type="match status" value="1"/>
</dbReference>